<gene>
    <name type="primary">ptsI</name>
    <name type="ordered locus">BUsg_061</name>
</gene>
<keyword id="KW-0963">Cytoplasm</keyword>
<keyword id="KW-0418">Kinase</keyword>
<keyword id="KW-0460">Magnesium</keyword>
<keyword id="KW-0479">Metal-binding</keyword>
<keyword id="KW-0598">Phosphotransferase system</keyword>
<keyword id="KW-0762">Sugar transport</keyword>
<keyword id="KW-0808">Transferase</keyword>
<keyword id="KW-0813">Transport</keyword>
<name>PT1_BUCAP</name>
<proteinExistence type="inferred from homology"/>
<dbReference type="EC" id="2.7.3.9" evidence="1"/>
<dbReference type="EMBL" id="AE013218">
    <property type="protein sequence ID" value="AAM67632.1"/>
    <property type="molecule type" value="Genomic_DNA"/>
</dbReference>
<dbReference type="RefSeq" id="WP_011053598.1">
    <property type="nucleotide sequence ID" value="NC_004061.1"/>
</dbReference>
<dbReference type="SMR" id="Q8KA50"/>
<dbReference type="STRING" id="198804.BUsg_061"/>
<dbReference type="GeneID" id="93003528"/>
<dbReference type="KEGG" id="bas:BUsg_061"/>
<dbReference type="eggNOG" id="COG1080">
    <property type="taxonomic scope" value="Bacteria"/>
</dbReference>
<dbReference type="HOGENOM" id="CLU_007308_7_0_6"/>
<dbReference type="Proteomes" id="UP000000416">
    <property type="component" value="Chromosome"/>
</dbReference>
<dbReference type="GO" id="GO:0005737">
    <property type="term" value="C:cytoplasm"/>
    <property type="evidence" value="ECO:0007669"/>
    <property type="project" value="UniProtKB-SubCell"/>
</dbReference>
<dbReference type="GO" id="GO:0016301">
    <property type="term" value="F:kinase activity"/>
    <property type="evidence" value="ECO:0007669"/>
    <property type="project" value="UniProtKB-KW"/>
</dbReference>
<dbReference type="GO" id="GO:0046872">
    <property type="term" value="F:metal ion binding"/>
    <property type="evidence" value="ECO:0007669"/>
    <property type="project" value="UniProtKB-KW"/>
</dbReference>
<dbReference type="GO" id="GO:0008965">
    <property type="term" value="F:phosphoenolpyruvate-protein phosphotransferase activity"/>
    <property type="evidence" value="ECO:0007669"/>
    <property type="project" value="UniProtKB-EC"/>
</dbReference>
<dbReference type="GO" id="GO:0009401">
    <property type="term" value="P:phosphoenolpyruvate-dependent sugar phosphotransferase system"/>
    <property type="evidence" value="ECO:0007669"/>
    <property type="project" value="UniProtKB-KW"/>
</dbReference>
<dbReference type="FunFam" id="3.20.20.60:FF:000007">
    <property type="entry name" value="Phosphoenolpyruvate-protein phosphotransferase"/>
    <property type="match status" value="1"/>
</dbReference>
<dbReference type="Gene3D" id="3.20.20.60">
    <property type="entry name" value="Phosphoenolpyruvate-binding domains"/>
    <property type="match status" value="1"/>
</dbReference>
<dbReference type="Gene3D" id="3.50.30.10">
    <property type="entry name" value="Phosphohistidine domain"/>
    <property type="match status" value="1"/>
</dbReference>
<dbReference type="Gene3D" id="1.10.274.10">
    <property type="entry name" value="PtsI, HPr-binding domain"/>
    <property type="match status" value="1"/>
</dbReference>
<dbReference type="InterPro" id="IPR008279">
    <property type="entry name" value="PEP-util_enz_mobile_dom"/>
</dbReference>
<dbReference type="InterPro" id="IPR050499">
    <property type="entry name" value="PEP-utilizing_PTS_enzyme"/>
</dbReference>
<dbReference type="InterPro" id="IPR018274">
    <property type="entry name" value="PEP_util_AS"/>
</dbReference>
<dbReference type="InterPro" id="IPR000121">
    <property type="entry name" value="PEP_util_C"/>
</dbReference>
<dbReference type="InterPro" id="IPR023151">
    <property type="entry name" value="PEP_util_CS"/>
</dbReference>
<dbReference type="InterPro" id="IPR036637">
    <property type="entry name" value="Phosphohistidine_dom_sf"/>
</dbReference>
<dbReference type="InterPro" id="IPR024692">
    <property type="entry name" value="PTS_EI"/>
</dbReference>
<dbReference type="InterPro" id="IPR006318">
    <property type="entry name" value="PTS_EI-like"/>
</dbReference>
<dbReference type="InterPro" id="IPR008731">
    <property type="entry name" value="PTS_EIN"/>
</dbReference>
<dbReference type="InterPro" id="IPR036618">
    <property type="entry name" value="PtsI_HPr-bd_sf"/>
</dbReference>
<dbReference type="InterPro" id="IPR015813">
    <property type="entry name" value="Pyrv/PenolPyrv_kinase-like_dom"/>
</dbReference>
<dbReference type="InterPro" id="IPR040442">
    <property type="entry name" value="Pyrv_kinase-like_dom_sf"/>
</dbReference>
<dbReference type="NCBIfam" id="NF008382">
    <property type="entry name" value="PRK11177.1"/>
    <property type="match status" value="1"/>
</dbReference>
<dbReference type="NCBIfam" id="TIGR01417">
    <property type="entry name" value="PTS_I_fam"/>
    <property type="match status" value="1"/>
</dbReference>
<dbReference type="PANTHER" id="PTHR46244">
    <property type="entry name" value="PHOSPHOENOLPYRUVATE-PROTEIN PHOSPHOTRANSFERASE"/>
    <property type="match status" value="1"/>
</dbReference>
<dbReference type="PANTHER" id="PTHR46244:SF6">
    <property type="entry name" value="PHOSPHOENOLPYRUVATE-PROTEIN PHOSPHOTRANSFERASE"/>
    <property type="match status" value="1"/>
</dbReference>
<dbReference type="Pfam" id="PF05524">
    <property type="entry name" value="PEP-utilisers_N"/>
    <property type="match status" value="1"/>
</dbReference>
<dbReference type="Pfam" id="PF00391">
    <property type="entry name" value="PEP-utilizers"/>
    <property type="match status" value="1"/>
</dbReference>
<dbReference type="Pfam" id="PF02896">
    <property type="entry name" value="PEP-utilizers_C"/>
    <property type="match status" value="1"/>
</dbReference>
<dbReference type="PIRSF" id="PIRSF000732">
    <property type="entry name" value="PTS_enzyme_I"/>
    <property type="match status" value="1"/>
</dbReference>
<dbReference type="PRINTS" id="PR01736">
    <property type="entry name" value="PHPHTRNFRASE"/>
</dbReference>
<dbReference type="SUPFAM" id="SSF47831">
    <property type="entry name" value="Enzyme I of the PEP:sugar phosphotransferase system HPr-binding (sub)domain"/>
    <property type="match status" value="1"/>
</dbReference>
<dbReference type="SUPFAM" id="SSF51621">
    <property type="entry name" value="Phosphoenolpyruvate/pyruvate domain"/>
    <property type="match status" value="1"/>
</dbReference>
<dbReference type="SUPFAM" id="SSF52009">
    <property type="entry name" value="Phosphohistidine domain"/>
    <property type="match status" value="1"/>
</dbReference>
<dbReference type="PROSITE" id="PS00742">
    <property type="entry name" value="PEP_ENZYMES_2"/>
    <property type="match status" value="1"/>
</dbReference>
<dbReference type="PROSITE" id="PS00370">
    <property type="entry name" value="PEP_ENZYMES_PHOS_SITE"/>
    <property type="match status" value="1"/>
</dbReference>
<feature type="chain" id="PRO_0000147062" description="Phosphoenolpyruvate-protein phosphotransferase">
    <location>
        <begin position="1"/>
        <end position="570"/>
    </location>
</feature>
<feature type="active site" description="Tele-phosphohistidine intermediate" evidence="1">
    <location>
        <position position="189"/>
    </location>
</feature>
<feature type="active site" description="Proton donor" evidence="1">
    <location>
        <position position="502"/>
    </location>
</feature>
<feature type="binding site" evidence="2">
    <location>
        <position position="296"/>
    </location>
    <ligand>
        <name>phosphoenolpyruvate</name>
        <dbReference type="ChEBI" id="CHEBI:58702"/>
    </ligand>
</feature>
<feature type="binding site" evidence="1">
    <location>
        <position position="332"/>
    </location>
    <ligand>
        <name>phosphoenolpyruvate</name>
        <dbReference type="ChEBI" id="CHEBI:58702"/>
    </ligand>
</feature>
<feature type="binding site" evidence="1">
    <location>
        <position position="431"/>
    </location>
    <ligand>
        <name>Mg(2+)</name>
        <dbReference type="ChEBI" id="CHEBI:18420"/>
    </ligand>
</feature>
<feature type="binding site" evidence="1">
    <location>
        <begin position="454"/>
        <end position="455"/>
    </location>
    <ligand>
        <name>phosphoenolpyruvate</name>
        <dbReference type="ChEBI" id="CHEBI:58702"/>
    </ligand>
</feature>
<feature type="binding site" evidence="1">
    <location>
        <position position="455"/>
    </location>
    <ligand>
        <name>Mg(2+)</name>
        <dbReference type="ChEBI" id="CHEBI:18420"/>
    </ligand>
</feature>
<feature type="binding site" evidence="2">
    <location>
        <position position="465"/>
    </location>
    <ligand>
        <name>phosphoenolpyruvate</name>
        <dbReference type="ChEBI" id="CHEBI:58702"/>
    </ligand>
</feature>
<reference key="1">
    <citation type="journal article" date="2002" name="Science">
        <title>50 million years of genomic stasis in endosymbiotic bacteria.</title>
        <authorList>
            <person name="Tamas I."/>
            <person name="Klasson L."/>
            <person name="Canbaeck B."/>
            <person name="Naeslund A.K."/>
            <person name="Eriksson A.-S."/>
            <person name="Wernegreen J.J."/>
            <person name="Sandstroem J.P."/>
            <person name="Moran N.A."/>
            <person name="Andersson S.G.E."/>
        </authorList>
    </citation>
    <scope>NUCLEOTIDE SEQUENCE [LARGE SCALE GENOMIC DNA]</scope>
    <source>
        <strain>Sg</strain>
    </source>
</reference>
<evidence type="ECO:0000250" key="1">
    <source>
        <dbReference type="UniProtKB" id="P08839"/>
    </source>
</evidence>
<evidence type="ECO:0000250" key="2">
    <source>
        <dbReference type="UniProtKB" id="P23533"/>
    </source>
</evidence>
<evidence type="ECO:0000305" key="3"/>
<protein>
    <recommendedName>
        <fullName evidence="1">Phosphoenolpyruvate-protein phosphotransferase</fullName>
        <ecNumber evidence="1">2.7.3.9</ecNumber>
    </recommendedName>
    <alternativeName>
        <fullName evidence="1">Phosphotransferase system, enzyme I</fullName>
    </alternativeName>
</protein>
<accession>Q8KA50</accession>
<organism>
    <name type="scientific">Buchnera aphidicola subsp. Schizaphis graminum (strain Sg)</name>
    <dbReference type="NCBI Taxonomy" id="198804"/>
    <lineage>
        <taxon>Bacteria</taxon>
        <taxon>Pseudomonadati</taxon>
        <taxon>Pseudomonadota</taxon>
        <taxon>Gammaproteobacteria</taxon>
        <taxon>Enterobacterales</taxon>
        <taxon>Erwiniaceae</taxon>
        <taxon>Buchnera</taxon>
    </lineage>
</organism>
<sequence>MISGILASPGIAFGNVLLLKKEEIVINRQNISTENIKTEINKFFNGRKKSVKQLTEIKIATGEKFGKKKEGIFEGHIMLLEDEELEKEIINLITEKKISAAEATKFIIEGQAKALEKIKDEYLKNRAIDVRDIGSRLLKNILNISIVDLNNIKNQVILISKDLTPSETAQINLKYILGFITDLGGPTSHTSIMARSLEIPAIVGTVNITKKVKNNDFIILDSLNNEIIINPSDQIINEKKQVERKYFFKKENLKKLRNLYATTTDGHNIKIGSNIGNIQDIYSAKKNGAECIGLYRTEFLFMGRNALPTENEQFQAYKEIAESMENKPVIIRTMDIGGDKDLPYMNLPKEENPFLGWRAIRISMDRKEILHAQLRAILRASAFGKIYILFPMIISVEEIRTLKIEVHKLQIQLKKEHLVFDENIKIGIMIETPASAIIADHLIKEVDFFSIGTNDLTQYTLAVDRGNDLISHLYNPISPSVIQLIKQVIDISHLHGKWTGMCGELAGDERVTTLLLGMGLDEFSMSSTSIPKIKEIIRKTSFSKSQELAKKVLKAATTKEILDLLNKFII</sequence>
<comment type="function">
    <text evidence="1">General (non sugar-specific) component of the phosphoenolpyruvate-dependent sugar phosphotransferase system (sugar PTS). This major carbohydrate active-transport system catalyzes the phosphorylation of incoming sugar substrates concomitantly with their translocation across the cell membrane. Enzyme I transfers the phosphoryl group from phosphoenolpyruvate (PEP) to the phosphoryl carrier protein (HPr).</text>
</comment>
<comment type="catalytic activity">
    <reaction evidence="1">
        <text>L-histidyl-[protein] + phosphoenolpyruvate = N(pros)-phospho-L-histidyl-[protein] + pyruvate</text>
        <dbReference type="Rhea" id="RHEA:23880"/>
        <dbReference type="Rhea" id="RHEA-COMP:9745"/>
        <dbReference type="Rhea" id="RHEA-COMP:9746"/>
        <dbReference type="ChEBI" id="CHEBI:15361"/>
        <dbReference type="ChEBI" id="CHEBI:29979"/>
        <dbReference type="ChEBI" id="CHEBI:58702"/>
        <dbReference type="ChEBI" id="CHEBI:64837"/>
        <dbReference type="EC" id="2.7.3.9"/>
    </reaction>
</comment>
<comment type="cofactor">
    <cofactor evidence="1">
        <name>Mg(2+)</name>
        <dbReference type="ChEBI" id="CHEBI:18420"/>
    </cofactor>
</comment>
<comment type="subunit">
    <text evidence="1">Homodimer.</text>
</comment>
<comment type="subcellular location">
    <subcellularLocation>
        <location evidence="3">Cytoplasm</location>
    </subcellularLocation>
</comment>
<comment type="domain">
    <text evidence="1">The N-terminal domain contains the HPr binding site, the central domain the pyrophosphate/phosphate carrier histidine, and the C-terminal domain the pyruvate binding site.</text>
</comment>
<comment type="miscellaneous">
    <text evidence="1">The reaction takes place in three steps, mediated by a phosphocarrier histidine residue located on the surface of the central domain. The two first partial reactions are catalyzed at an active site located on the N-terminal domain, and the third partial reaction is catalyzed at an active site located on the C-terminal domain. For catalytic turnover, the central domain swivels from the concave surface of the N-terminal domain to that of the C-terminal domain.</text>
</comment>
<comment type="similarity">
    <text evidence="3">Belongs to the PEP-utilizing enzyme family.</text>
</comment>